<proteinExistence type="predicted"/>
<sequence>MAMSNLPRDLLEEVLSRVPVKSIAAVRSTCKNWNSLTYGQSFTKKLYGKTMATKEKEFLVVMTMDLEVYLMRVNLHGIHKDDNNVKSSIMQKAKLIRLNDDRVRVDDICKVFHCDGLLLCITIGIRLVVCNPYCGQTRCIKTRRDYHITDNYALGHEKMKNSPLRNYKILVFHDKSFLQNSWFEIYNFNSDSWKVLYFTCDWKLPFSQLVVSLKGNTYWFAREMYIHGPRIDLPDFLICFDFTTERFGPRLHLPFHSRCVDTVTLASVREEQLAVLFQDSKTLILEVWITTKIEPNAVSWSSKVFLEVNMSPLTGFQFNRSFGSFFIVEEKNVVVVPIKGGHFKRNLAYIIGKDEYFKEVDLGVPSSYIYFSPHVCSYVPSLVQIKKDAQVMLQHHNVSAEKHHEFCASL</sequence>
<feature type="chain" id="PRO_0000415912" description="F-box protein At5g36820">
    <location>
        <begin position="1"/>
        <end position="410"/>
    </location>
</feature>
<feature type="domain" description="F-box" evidence="1">
    <location>
        <begin position="1"/>
        <end position="46"/>
    </location>
</feature>
<evidence type="ECO:0000255" key="1">
    <source>
        <dbReference type="PROSITE-ProRule" id="PRU00080"/>
    </source>
</evidence>
<protein>
    <recommendedName>
        <fullName>F-box protein At5g36820</fullName>
    </recommendedName>
</protein>
<name>FB265_ARATH</name>
<organism>
    <name type="scientific">Arabidopsis thaliana</name>
    <name type="common">Mouse-ear cress</name>
    <dbReference type="NCBI Taxonomy" id="3702"/>
    <lineage>
        <taxon>Eukaryota</taxon>
        <taxon>Viridiplantae</taxon>
        <taxon>Streptophyta</taxon>
        <taxon>Embryophyta</taxon>
        <taxon>Tracheophyta</taxon>
        <taxon>Spermatophyta</taxon>
        <taxon>Magnoliopsida</taxon>
        <taxon>eudicotyledons</taxon>
        <taxon>Gunneridae</taxon>
        <taxon>Pentapetalae</taxon>
        <taxon>rosids</taxon>
        <taxon>malvids</taxon>
        <taxon>Brassicales</taxon>
        <taxon>Brassicaceae</taxon>
        <taxon>Camelineae</taxon>
        <taxon>Arabidopsis</taxon>
    </lineage>
</organism>
<keyword id="KW-1185">Reference proteome</keyword>
<accession>P0DI01</accession>
<accession>Q9LDB2</accession>
<reference key="1">
    <citation type="submission" date="2000-05" db="EMBL/GenBank/DDBJ databases">
        <title>Structural analysis of Arabidopsis thaliana chromosome 5. XI.</title>
        <authorList>
            <person name="Kaneko T."/>
            <person name="Katoh T."/>
            <person name="Asamizu E."/>
            <person name="Sato S."/>
            <person name="Nakamura Y."/>
            <person name="Kotani H."/>
            <person name="Tabata S."/>
        </authorList>
    </citation>
    <scope>NUCLEOTIDE SEQUENCE [LARGE SCALE GENOMIC DNA]</scope>
    <source>
        <strain>cv. Columbia</strain>
    </source>
</reference>
<reference key="2">
    <citation type="journal article" date="2017" name="Plant J.">
        <title>Araport11: a complete reannotation of the Arabidopsis thaliana reference genome.</title>
        <authorList>
            <person name="Cheng C.Y."/>
            <person name="Krishnakumar V."/>
            <person name="Chan A.P."/>
            <person name="Thibaud-Nissen F."/>
            <person name="Schobel S."/>
            <person name="Town C.D."/>
        </authorList>
    </citation>
    <scope>GENOME REANNOTATION</scope>
    <source>
        <strain>cv. Columbia</strain>
    </source>
</reference>
<dbReference type="EMBL" id="AB025605">
    <property type="protein sequence ID" value="BAA98059.1"/>
    <property type="molecule type" value="Genomic_DNA"/>
</dbReference>
<dbReference type="EMBL" id="CP002688">
    <property type="protein sequence ID" value="AED94118.1"/>
    <property type="molecule type" value="Genomic_DNA"/>
</dbReference>
<dbReference type="RefSeq" id="NP_568538.1">
    <property type="nucleotide sequence ID" value="NM_123030.1"/>
</dbReference>
<dbReference type="RefSeq" id="NP_568542.1">
    <property type="nucleotide sequence ID" value="NM_123040.1"/>
</dbReference>
<dbReference type="STRING" id="3702.P0DI01"/>
<dbReference type="EnsemblPlants" id="AT5G36730.1">
    <property type="protein sequence ID" value="AT5G36730.1"/>
    <property type="gene ID" value="AT5G36730"/>
</dbReference>
<dbReference type="EnsemblPlants" id="AT5G36820.1">
    <property type="protein sequence ID" value="AT5G36820.1"/>
    <property type="gene ID" value="AT5G36820"/>
</dbReference>
<dbReference type="GeneID" id="833649"/>
<dbReference type="Gramene" id="AT5G36730.1">
    <property type="protein sequence ID" value="AT5G36730.1"/>
    <property type="gene ID" value="AT5G36730"/>
</dbReference>
<dbReference type="Gramene" id="AT5G36820.1">
    <property type="protein sequence ID" value="AT5G36820.1"/>
    <property type="gene ID" value="AT5G36820"/>
</dbReference>
<dbReference type="KEGG" id="ath:AT5G36730"/>
<dbReference type="KEGG" id="ath:AT5G36820"/>
<dbReference type="Araport" id="AT5G36820"/>
<dbReference type="TAIR" id="AT5G36820"/>
<dbReference type="HOGENOM" id="CLU_034692_0_0_1"/>
<dbReference type="InParanoid" id="P0DI01"/>
<dbReference type="OMA" id="MEIWITY"/>
<dbReference type="PhylomeDB" id="P0DI01"/>
<dbReference type="PRO" id="PR:P0DI01"/>
<dbReference type="Proteomes" id="UP000006548">
    <property type="component" value="Chromosome 5"/>
</dbReference>
<dbReference type="CDD" id="cd22157">
    <property type="entry name" value="F-box_AtFBW1-like"/>
    <property type="match status" value="1"/>
</dbReference>
<dbReference type="Gene3D" id="1.20.1280.50">
    <property type="match status" value="1"/>
</dbReference>
<dbReference type="InterPro" id="IPR006527">
    <property type="entry name" value="F-box-assoc_dom_typ1"/>
</dbReference>
<dbReference type="InterPro" id="IPR017451">
    <property type="entry name" value="F-box-assoc_interact_dom"/>
</dbReference>
<dbReference type="InterPro" id="IPR036047">
    <property type="entry name" value="F-box-like_dom_sf"/>
</dbReference>
<dbReference type="InterPro" id="IPR001810">
    <property type="entry name" value="F-box_dom"/>
</dbReference>
<dbReference type="InterPro" id="IPR050796">
    <property type="entry name" value="SCF_F-box_component"/>
</dbReference>
<dbReference type="NCBIfam" id="TIGR01640">
    <property type="entry name" value="F_box_assoc_1"/>
    <property type="match status" value="1"/>
</dbReference>
<dbReference type="PANTHER" id="PTHR31672">
    <property type="entry name" value="BNACNNG10540D PROTEIN"/>
    <property type="match status" value="1"/>
</dbReference>
<dbReference type="PANTHER" id="PTHR31672:SF13">
    <property type="entry name" value="F-BOX PROTEIN CPR30-LIKE"/>
    <property type="match status" value="1"/>
</dbReference>
<dbReference type="Pfam" id="PF00646">
    <property type="entry name" value="F-box"/>
    <property type="match status" value="1"/>
</dbReference>
<dbReference type="Pfam" id="PF07734">
    <property type="entry name" value="FBA_1"/>
    <property type="match status" value="1"/>
</dbReference>
<dbReference type="SMART" id="SM00256">
    <property type="entry name" value="FBOX"/>
    <property type="match status" value="1"/>
</dbReference>
<dbReference type="SUPFAM" id="SSF81383">
    <property type="entry name" value="F-box domain"/>
    <property type="match status" value="1"/>
</dbReference>
<dbReference type="PROSITE" id="PS50181">
    <property type="entry name" value="FBOX"/>
    <property type="match status" value="1"/>
</dbReference>
<gene>
    <name type="ordered locus">At5g36820</name>
    <name type="ORF">F5H8.6</name>
</gene>